<protein>
    <recommendedName>
        <fullName evidence="1">Large ribosomal subunit protein uL24</fullName>
    </recommendedName>
    <alternativeName>
        <fullName evidence="2">50S ribosomal protein L24</fullName>
    </alternativeName>
</protein>
<evidence type="ECO:0000255" key="1">
    <source>
        <dbReference type="HAMAP-Rule" id="MF_01326"/>
    </source>
</evidence>
<evidence type="ECO:0000305" key="2"/>
<dbReference type="EMBL" id="BX569694">
    <property type="protein sequence ID" value="CAE08593.1"/>
    <property type="molecule type" value="Genomic_DNA"/>
</dbReference>
<dbReference type="RefSeq" id="WP_011128936.1">
    <property type="nucleotide sequence ID" value="NC_005070.1"/>
</dbReference>
<dbReference type="SMR" id="Q7U4I9"/>
<dbReference type="STRING" id="84588.SYNW2078"/>
<dbReference type="KEGG" id="syw:SYNW2078"/>
<dbReference type="eggNOG" id="COG0198">
    <property type="taxonomic scope" value="Bacteria"/>
</dbReference>
<dbReference type="HOGENOM" id="CLU_093315_2_3_3"/>
<dbReference type="Proteomes" id="UP000001422">
    <property type="component" value="Chromosome"/>
</dbReference>
<dbReference type="GO" id="GO:1990904">
    <property type="term" value="C:ribonucleoprotein complex"/>
    <property type="evidence" value="ECO:0007669"/>
    <property type="project" value="UniProtKB-KW"/>
</dbReference>
<dbReference type="GO" id="GO:0005840">
    <property type="term" value="C:ribosome"/>
    <property type="evidence" value="ECO:0007669"/>
    <property type="project" value="UniProtKB-KW"/>
</dbReference>
<dbReference type="GO" id="GO:0019843">
    <property type="term" value="F:rRNA binding"/>
    <property type="evidence" value="ECO:0007669"/>
    <property type="project" value="UniProtKB-UniRule"/>
</dbReference>
<dbReference type="GO" id="GO:0003735">
    <property type="term" value="F:structural constituent of ribosome"/>
    <property type="evidence" value="ECO:0007669"/>
    <property type="project" value="InterPro"/>
</dbReference>
<dbReference type="GO" id="GO:0006412">
    <property type="term" value="P:translation"/>
    <property type="evidence" value="ECO:0007669"/>
    <property type="project" value="UniProtKB-UniRule"/>
</dbReference>
<dbReference type="CDD" id="cd06089">
    <property type="entry name" value="KOW_RPL26"/>
    <property type="match status" value="1"/>
</dbReference>
<dbReference type="Gene3D" id="2.30.30.30">
    <property type="match status" value="1"/>
</dbReference>
<dbReference type="HAMAP" id="MF_01326_B">
    <property type="entry name" value="Ribosomal_uL24_B"/>
    <property type="match status" value="1"/>
</dbReference>
<dbReference type="InterPro" id="IPR005824">
    <property type="entry name" value="KOW"/>
</dbReference>
<dbReference type="InterPro" id="IPR014722">
    <property type="entry name" value="Rib_uL2_dom2"/>
</dbReference>
<dbReference type="InterPro" id="IPR003256">
    <property type="entry name" value="Ribosomal_uL24"/>
</dbReference>
<dbReference type="InterPro" id="IPR005825">
    <property type="entry name" value="Ribosomal_uL24_CS"/>
</dbReference>
<dbReference type="InterPro" id="IPR041988">
    <property type="entry name" value="Ribosomal_uL24_KOW"/>
</dbReference>
<dbReference type="InterPro" id="IPR008991">
    <property type="entry name" value="Translation_prot_SH3-like_sf"/>
</dbReference>
<dbReference type="NCBIfam" id="TIGR01079">
    <property type="entry name" value="rplX_bact"/>
    <property type="match status" value="1"/>
</dbReference>
<dbReference type="PANTHER" id="PTHR12903">
    <property type="entry name" value="MITOCHONDRIAL RIBOSOMAL PROTEIN L24"/>
    <property type="match status" value="1"/>
</dbReference>
<dbReference type="Pfam" id="PF00467">
    <property type="entry name" value="KOW"/>
    <property type="match status" value="1"/>
</dbReference>
<dbReference type="Pfam" id="PF17136">
    <property type="entry name" value="ribosomal_L24"/>
    <property type="match status" value="1"/>
</dbReference>
<dbReference type="SMART" id="SM00739">
    <property type="entry name" value="KOW"/>
    <property type="match status" value="1"/>
</dbReference>
<dbReference type="SUPFAM" id="SSF50104">
    <property type="entry name" value="Translation proteins SH3-like domain"/>
    <property type="match status" value="1"/>
</dbReference>
<dbReference type="PROSITE" id="PS01108">
    <property type="entry name" value="RIBOSOMAL_L24"/>
    <property type="match status" value="1"/>
</dbReference>
<comment type="function">
    <text evidence="1">One of two assembly initiator proteins, it binds directly to the 5'-end of the 23S rRNA, where it nucleates assembly of the 50S subunit.</text>
</comment>
<comment type="function">
    <text evidence="1">One of the proteins that surrounds the polypeptide exit tunnel on the outside of the subunit.</text>
</comment>
<comment type="subunit">
    <text evidence="1">Part of the 50S ribosomal subunit.</text>
</comment>
<comment type="similarity">
    <text evidence="1">Belongs to the universal ribosomal protein uL24 family.</text>
</comment>
<proteinExistence type="inferred from homology"/>
<gene>
    <name evidence="1" type="primary">rplX</name>
    <name evidence="1" type="synonym">rpl24</name>
    <name type="ordered locus">SYNW2078</name>
</gene>
<reference key="1">
    <citation type="journal article" date="2003" name="Nature">
        <title>The genome of a motile marine Synechococcus.</title>
        <authorList>
            <person name="Palenik B."/>
            <person name="Brahamsha B."/>
            <person name="Larimer F.W."/>
            <person name="Land M.L."/>
            <person name="Hauser L."/>
            <person name="Chain P."/>
            <person name="Lamerdin J.E."/>
            <person name="Regala W."/>
            <person name="Allen E.E."/>
            <person name="McCarren J."/>
            <person name="Paulsen I.T."/>
            <person name="Dufresne A."/>
            <person name="Partensky F."/>
            <person name="Webb E.A."/>
            <person name="Waterbury J."/>
        </authorList>
    </citation>
    <scope>NUCLEOTIDE SEQUENCE [LARGE SCALE GENOMIC DNA]</scope>
    <source>
        <strain>WH8102</strain>
    </source>
</reference>
<sequence length="118" mass="13070">MATATSKAKPSDRIKMRIRKGDTVQVIAGKDKGKTGEVLRTLPNENRLIVEGVNMRTRHEKPTQEGETGRIVNEEASLHASNVMLYSTAKKVASRVEIVVEKDGSKKRKLKKTGEVLD</sequence>
<name>RL24_PARMW</name>
<accession>Q7U4I9</accession>
<feature type="chain" id="PRO_0000130737" description="Large ribosomal subunit protein uL24">
    <location>
        <begin position="1"/>
        <end position="118"/>
    </location>
</feature>
<organism>
    <name type="scientific">Parasynechococcus marenigrum (strain WH8102)</name>
    <dbReference type="NCBI Taxonomy" id="84588"/>
    <lineage>
        <taxon>Bacteria</taxon>
        <taxon>Bacillati</taxon>
        <taxon>Cyanobacteriota</taxon>
        <taxon>Cyanophyceae</taxon>
        <taxon>Synechococcales</taxon>
        <taxon>Prochlorococcaceae</taxon>
        <taxon>Parasynechococcus</taxon>
        <taxon>Parasynechococcus marenigrum</taxon>
    </lineage>
</organism>
<keyword id="KW-0687">Ribonucleoprotein</keyword>
<keyword id="KW-0689">Ribosomal protein</keyword>
<keyword id="KW-0694">RNA-binding</keyword>
<keyword id="KW-0699">rRNA-binding</keyword>